<feature type="chain" id="PRO_0000361695" description="Serine/threonine-protein kinase pakC">
    <location>
        <begin position="1"/>
        <end position="477"/>
    </location>
</feature>
<feature type="domain" description="PH" evidence="2">
    <location>
        <begin position="13"/>
        <end position="108"/>
    </location>
</feature>
<feature type="domain" description="CRIB" evidence="1">
    <location>
        <begin position="112"/>
        <end position="125"/>
    </location>
</feature>
<feature type="domain" description="Protein kinase" evidence="3">
    <location>
        <begin position="204"/>
        <end position="458"/>
    </location>
</feature>
<feature type="active site" description="Proton acceptor" evidence="3">
    <location>
        <position position="326"/>
    </location>
</feature>
<feature type="binding site" evidence="3">
    <location>
        <begin position="210"/>
        <end position="218"/>
    </location>
    <ligand>
        <name>ATP</name>
        <dbReference type="ChEBI" id="CHEBI:30616"/>
    </ligand>
</feature>
<feature type="binding site" evidence="3">
    <location>
        <position position="233"/>
    </location>
    <ligand>
        <name>ATP</name>
        <dbReference type="ChEBI" id="CHEBI:30616"/>
    </ligand>
</feature>
<feature type="mutagenesis site" description="Low basal kinase activity, loss of response to chemoattractant, reduction of cell polarity and production of multiple lateral pseudopodia." evidence="4">
    <original>R</original>
    <variation>C</variation>
    <location>
        <position position="33"/>
    </location>
</feature>
<feature type="mutagenesis site" description="High basal kinase activity, loss of response to chemoattractant, loss of racB binding; when associated with L-139." evidence="4">
    <original>H</original>
    <variation>L</variation>
    <location>
        <position position="120"/>
    </location>
</feature>
<feature type="mutagenesis site" description="High basal kinase activity, loss of response to chemoattractant, loss of racB binding; when associated with L-136." evidence="4">
    <original>H</original>
    <variation>L</variation>
    <location>
        <position position="123"/>
    </location>
</feature>
<feature type="mutagenesis site" description="High basal kinase activity but retains response to chemoattractant." evidence="4">
    <original>L</original>
    <variation>F</variation>
    <location>
        <position position="143"/>
    </location>
</feature>
<feature type="mutagenesis site" description="Loss of kinase activity." evidence="4">
    <original>K</original>
    <variation>A</variation>
    <location>
        <position position="233"/>
    </location>
</feature>
<feature type="mutagenesis site" description="Low basal kinase activity, loss of response to chemoattractant, reduction of cell polarity and production of multiple lateral pseudopodia; when associated with A-485." evidence="4">
    <original>S</original>
    <variation>A</variation>
    <location>
        <position position="465"/>
    </location>
</feature>
<feature type="mutagenesis site" description="Low basal kinase activity, loss of response to chemoattractant, reduction of cell polarity and production of multiple lateral pseudopodia; when associated with A-481." evidence="4">
    <original>P</original>
    <variation>A</variation>
    <location>
        <position position="469"/>
    </location>
</feature>
<feature type="sequence conflict" description="In Ref. 1; no nucleotide entry and 2; AAF82310." evidence="6" ref="1 2">
    <original>L</original>
    <variation>LE</variation>
    <location>
        <position position="4"/>
    </location>
</feature>
<proteinExistence type="evidence at protein level"/>
<keyword id="KW-0067">ATP-binding</keyword>
<keyword id="KW-0145">Chemotaxis</keyword>
<keyword id="KW-0963">Cytoplasm</keyword>
<keyword id="KW-0418">Kinase</keyword>
<keyword id="KW-0460">Magnesium</keyword>
<keyword id="KW-0472">Membrane</keyword>
<keyword id="KW-0479">Metal-binding</keyword>
<keyword id="KW-0547">Nucleotide-binding</keyword>
<keyword id="KW-1185">Reference proteome</keyword>
<keyword id="KW-0723">Serine/threonine-protein kinase</keyword>
<keyword id="KW-0808">Transferase</keyword>
<sequence>MISLDLSPTLWKSPDKEGELKKQGHVVKNWKKRKFIIQNDMLFYFKDKEERPVGAVPLRMSRCYENKSLGKPNCFELVSPRINKTFFIQANTPDEMASWMKAVEKGSEYSTVSQPFNLKHEVHVDFNSATGFSGLPKEWEVILKSSNVSKQEVLDKPSEWLSVLEFQAGRTMEKSNSQNLSALPDESNLTLSDLVTKEDPTKIYKNMTKIGEGAAGEVFVATSSKNNKRVAIKKIEINNDNAKLLVTEIAIMKTSHHDNIVNYIDSYIVNDRELWVAMEFMGGGCLTDILEAFDNIKMSEIQIAYVVKETLKALQYIHSLHRIHRDIKSDNILLGSEGSVKIADFGYAAQLTQKQQKRNTVVGTPYWMAPELIRGHDYGVKVDIWSLGIMMMEMAEGEPPYMDFPPLRALFLITTKGIPPLKETTKWSKTFQDFFSKCLDINVANRPDATDLLKHPFMDLACDSSEFKPLIQAARNV</sequence>
<protein>
    <recommendedName>
        <fullName evidence="5">Serine/threonine-protein kinase pakC</fullName>
        <shortName>dPAKc</shortName>
        <ecNumber>2.7.11.1</ecNumber>
    </recommendedName>
</protein>
<evidence type="ECO:0000255" key="1">
    <source>
        <dbReference type="PROSITE-ProRule" id="PRU00057"/>
    </source>
</evidence>
<evidence type="ECO:0000255" key="2">
    <source>
        <dbReference type="PROSITE-ProRule" id="PRU00145"/>
    </source>
</evidence>
<evidence type="ECO:0000255" key="3">
    <source>
        <dbReference type="PROSITE-ProRule" id="PRU00159"/>
    </source>
</evidence>
<evidence type="ECO:0000269" key="4">
    <source>
    </source>
</evidence>
<evidence type="ECO:0000303" key="5">
    <source>
    </source>
</evidence>
<evidence type="ECO:0000305" key="6"/>
<evidence type="ECO:0000312" key="7">
    <source>
        <dbReference type="EMBL" id="AAF82310.3"/>
    </source>
</evidence>
<organism>
    <name type="scientific">Dictyostelium discoideum</name>
    <name type="common">Social amoeba</name>
    <dbReference type="NCBI Taxonomy" id="44689"/>
    <lineage>
        <taxon>Eukaryota</taxon>
        <taxon>Amoebozoa</taxon>
        <taxon>Evosea</taxon>
        <taxon>Eumycetozoa</taxon>
        <taxon>Dictyostelia</taxon>
        <taxon>Dictyosteliales</taxon>
        <taxon>Dictyosteliaceae</taxon>
        <taxon>Dictyostelium</taxon>
    </lineage>
</organism>
<gene>
    <name type="primary">pakC</name>
    <name type="ORF">DDB_G0267450</name>
</gene>
<comment type="function">
    <text evidence="4">Has role in the regulation of chemotaxis.</text>
</comment>
<comment type="catalytic activity">
    <reaction evidence="4">
        <text>L-seryl-[protein] + ATP = O-phospho-L-seryl-[protein] + ADP + H(+)</text>
        <dbReference type="Rhea" id="RHEA:17989"/>
        <dbReference type="Rhea" id="RHEA-COMP:9863"/>
        <dbReference type="Rhea" id="RHEA-COMP:11604"/>
        <dbReference type="ChEBI" id="CHEBI:15378"/>
        <dbReference type="ChEBI" id="CHEBI:29999"/>
        <dbReference type="ChEBI" id="CHEBI:30616"/>
        <dbReference type="ChEBI" id="CHEBI:83421"/>
        <dbReference type="ChEBI" id="CHEBI:456216"/>
        <dbReference type="EC" id="2.7.11.1"/>
    </reaction>
</comment>
<comment type="catalytic activity">
    <reaction evidence="4">
        <text>L-threonyl-[protein] + ATP = O-phospho-L-threonyl-[protein] + ADP + H(+)</text>
        <dbReference type="Rhea" id="RHEA:46608"/>
        <dbReference type="Rhea" id="RHEA-COMP:11060"/>
        <dbReference type="Rhea" id="RHEA-COMP:11605"/>
        <dbReference type="ChEBI" id="CHEBI:15378"/>
        <dbReference type="ChEBI" id="CHEBI:30013"/>
        <dbReference type="ChEBI" id="CHEBI:30616"/>
        <dbReference type="ChEBI" id="CHEBI:61977"/>
        <dbReference type="ChEBI" id="CHEBI:456216"/>
        <dbReference type="EC" id="2.7.11.1"/>
    </reaction>
</comment>
<comment type="cofactor">
    <cofactor evidence="4">
        <name>Mg(2+)</name>
        <dbReference type="ChEBI" id="CHEBI:18420"/>
    </cofactor>
</comment>
<comment type="activity regulation">
    <text evidence="4">Kinase activity is rapidly and transiently increased in response to chemoattractant stimulation.</text>
</comment>
<comment type="subunit">
    <text evidence="4">Interacts with GTP-bound racB.</text>
</comment>
<comment type="subcellular location">
    <subcellularLocation>
        <location evidence="4">Cytoplasm</location>
    </subcellularLocation>
    <subcellularLocation>
        <location evidence="4">Membrane</location>
    </subcellularLocation>
    <text evidence="4">Cytosolic in unstimulated cells, localizes to the plasma membrane in response to chemoattractant stimulation with kinetics consistent with those of kinase activation, where it binds to phospholipids via its PH domain.</text>
</comment>
<comment type="developmental stage">
    <text evidence="4">Preferentially expressed during vegetative growth and in the earliest stages of development. Expressed at significantly lower levels during later stages of development.</text>
</comment>
<comment type="disruption phenotype">
    <text evidence="4">Cells are less-polarized than wild-type and are unable to properly regulate the direction of pseudopod formation, resulting in a reduction in the distance traveled in response to chemoattractant.</text>
</comment>
<comment type="similarity">
    <text evidence="4">Belongs to the protein kinase superfamily. STE Ser/Thr protein kinase family. STE20 subfamily.</text>
</comment>
<dbReference type="EC" id="2.7.11.1"/>
<dbReference type="EMBL" id="AF277804">
    <property type="protein sequence ID" value="AAF82310.3"/>
    <property type="molecule type" value="mRNA"/>
</dbReference>
<dbReference type="EMBL" id="AAFI02000003">
    <property type="protein sequence ID" value="EAL73178.2"/>
    <property type="molecule type" value="Genomic_DNA"/>
</dbReference>
<dbReference type="RefSeq" id="XP_647081.2">
    <property type="nucleotide sequence ID" value="XM_641989.2"/>
</dbReference>
<dbReference type="SMR" id="Q55GV3"/>
<dbReference type="FunCoup" id="Q55GV3">
    <property type="interactions" value="115"/>
</dbReference>
<dbReference type="IntAct" id="Q55GV3">
    <property type="interactions" value="1"/>
</dbReference>
<dbReference type="STRING" id="44689.Q55GV3"/>
<dbReference type="PaxDb" id="44689-DDB0267078"/>
<dbReference type="GeneID" id="8615885"/>
<dbReference type="KEGG" id="ddi:DDB_G0267450"/>
<dbReference type="dictyBase" id="DDB_G0267450">
    <property type="gene designation" value="pakC"/>
</dbReference>
<dbReference type="VEuPathDB" id="AmoebaDB:DDB_G0267450"/>
<dbReference type="eggNOG" id="KOG0578">
    <property type="taxonomic scope" value="Eukaryota"/>
</dbReference>
<dbReference type="HOGENOM" id="CLU_000288_26_6_1"/>
<dbReference type="InParanoid" id="Q55GV3"/>
<dbReference type="OMA" id="YMDFPPL"/>
<dbReference type="PhylomeDB" id="Q55GV3"/>
<dbReference type="Reactome" id="R-DDI-2029482">
    <property type="pathway name" value="Regulation of actin dynamics for phagocytic cup formation"/>
</dbReference>
<dbReference type="Reactome" id="R-DDI-389359">
    <property type="pathway name" value="CD28 dependent Vav1 pathway"/>
</dbReference>
<dbReference type="Reactome" id="R-DDI-3928662">
    <property type="pathway name" value="EPHB-mediated forward signaling"/>
</dbReference>
<dbReference type="Reactome" id="R-DDI-445144">
    <property type="pathway name" value="Signal transduction by L1"/>
</dbReference>
<dbReference type="Reactome" id="R-DDI-5627123">
    <property type="pathway name" value="RHO GTPases activate PAKs"/>
</dbReference>
<dbReference type="Reactome" id="R-DDI-5687128">
    <property type="pathway name" value="MAPK6/MAPK4 signaling"/>
</dbReference>
<dbReference type="Reactome" id="R-DDI-9013149">
    <property type="pathway name" value="RAC1 GTPase cycle"/>
</dbReference>
<dbReference type="Reactome" id="R-DDI-9013404">
    <property type="pathway name" value="RAC2 GTPase cycle"/>
</dbReference>
<dbReference type="Reactome" id="R-DDI-9013406">
    <property type="pathway name" value="RHOQ GTPase cycle"/>
</dbReference>
<dbReference type="Reactome" id="R-DDI-9013407">
    <property type="pathway name" value="RHOH GTPase cycle"/>
</dbReference>
<dbReference type="Reactome" id="R-DDI-9013408">
    <property type="pathway name" value="RHOG GTPase cycle"/>
</dbReference>
<dbReference type="Reactome" id="R-DDI-9013420">
    <property type="pathway name" value="RHOU GTPase cycle"/>
</dbReference>
<dbReference type="Reactome" id="R-DDI-9013423">
    <property type="pathway name" value="RAC3 GTPase cycle"/>
</dbReference>
<dbReference type="Reactome" id="R-DDI-9013424">
    <property type="pathway name" value="RHOV GTPase cycle"/>
</dbReference>
<dbReference type="PRO" id="PR:Q55GV3"/>
<dbReference type="Proteomes" id="UP000002195">
    <property type="component" value="Chromosome 1"/>
</dbReference>
<dbReference type="GO" id="GO:0005737">
    <property type="term" value="C:cytoplasm"/>
    <property type="evidence" value="ECO:0000318"/>
    <property type="project" value="GO_Central"/>
</dbReference>
<dbReference type="GO" id="GO:0005829">
    <property type="term" value="C:cytosol"/>
    <property type="evidence" value="ECO:0000314"/>
    <property type="project" value="dictyBase"/>
</dbReference>
<dbReference type="GO" id="GO:0005886">
    <property type="term" value="C:plasma membrane"/>
    <property type="evidence" value="ECO:0000314"/>
    <property type="project" value="dictyBase"/>
</dbReference>
<dbReference type="GO" id="GO:0005524">
    <property type="term" value="F:ATP binding"/>
    <property type="evidence" value="ECO:0007669"/>
    <property type="project" value="UniProtKB-KW"/>
</dbReference>
<dbReference type="GO" id="GO:0046872">
    <property type="term" value="F:metal ion binding"/>
    <property type="evidence" value="ECO:0007669"/>
    <property type="project" value="UniProtKB-KW"/>
</dbReference>
<dbReference type="GO" id="GO:0043325">
    <property type="term" value="F:phosphatidylinositol-3,4-bisphosphate binding"/>
    <property type="evidence" value="ECO:0000314"/>
    <property type="project" value="dictyBase"/>
</dbReference>
<dbReference type="GO" id="GO:0106310">
    <property type="term" value="F:protein serine kinase activity"/>
    <property type="evidence" value="ECO:0007669"/>
    <property type="project" value="RHEA"/>
</dbReference>
<dbReference type="GO" id="GO:0004674">
    <property type="term" value="F:protein serine/threonine kinase activity"/>
    <property type="evidence" value="ECO:0000318"/>
    <property type="project" value="GO_Central"/>
</dbReference>
<dbReference type="GO" id="GO:0031267">
    <property type="term" value="F:small GTPase binding"/>
    <property type="evidence" value="ECO:0000353"/>
    <property type="project" value="dictyBase"/>
</dbReference>
<dbReference type="GO" id="GO:0009267">
    <property type="term" value="P:cellular response to starvation"/>
    <property type="evidence" value="ECO:0000318"/>
    <property type="project" value="GO_Central"/>
</dbReference>
<dbReference type="GO" id="GO:0043327">
    <property type="term" value="P:chemotaxis to cAMP"/>
    <property type="evidence" value="ECO:0000315"/>
    <property type="project" value="dictyBase"/>
</dbReference>
<dbReference type="GO" id="GO:0007163">
    <property type="term" value="P:establishment or maintenance of cell polarity"/>
    <property type="evidence" value="ECO:0000315"/>
    <property type="project" value="dictyBase"/>
</dbReference>
<dbReference type="GO" id="GO:0035556">
    <property type="term" value="P:intracellular signal transduction"/>
    <property type="evidence" value="ECO:0000318"/>
    <property type="project" value="GO_Central"/>
</dbReference>
<dbReference type="GO" id="GO:0000281">
    <property type="term" value="P:mitotic cytokinesis"/>
    <property type="evidence" value="ECO:0000315"/>
    <property type="project" value="dictyBase"/>
</dbReference>
<dbReference type="GO" id="GO:0031273">
    <property type="term" value="P:negative regulation of pseudopodium assembly"/>
    <property type="evidence" value="ECO:0000315"/>
    <property type="project" value="dictyBase"/>
</dbReference>
<dbReference type="GO" id="GO:0043408">
    <property type="term" value="P:regulation of MAPK cascade"/>
    <property type="evidence" value="ECO:0000318"/>
    <property type="project" value="GO_Central"/>
</dbReference>
<dbReference type="CDD" id="cd01093">
    <property type="entry name" value="CRIB_PAK_like"/>
    <property type="match status" value="1"/>
</dbReference>
<dbReference type="CDD" id="cd06614">
    <property type="entry name" value="STKc_PAK"/>
    <property type="match status" value="1"/>
</dbReference>
<dbReference type="FunFam" id="3.30.200.20:FF:001063">
    <property type="entry name" value="Non-specific serine/threonine protein kinase"/>
    <property type="match status" value="1"/>
</dbReference>
<dbReference type="FunFam" id="3.90.810.10:FF:000005">
    <property type="entry name" value="Non-specific serine/threonine protein kinase"/>
    <property type="match status" value="1"/>
</dbReference>
<dbReference type="FunFam" id="1.10.510.10:FF:000802">
    <property type="entry name" value="Serine/threonine protein kinase"/>
    <property type="match status" value="1"/>
</dbReference>
<dbReference type="FunFam" id="2.30.29.30:FF:000710">
    <property type="entry name" value="Serine/threonine-protein kinase pakC"/>
    <property type="match status" value="1"/>
</dbReference>
<dbReference type="Gene3D" id="3.90.810.10">
    <property type="entry name" value="CRIB domain"/>
    <property type="match status" value="1"/>
</dbReference>
<dbReference type="Gene3D" id="3.30.200.20">
    <property type="entry name" value="Phosphorylase Kinase, domain 1"/>
    <property type="match status" value="1"/>
</dbReference>
<dbReference type="Gene3D" id="2.30.29.30">
    <property type="entry name" value="Pleckstrin-homology domain (PH domain)/Phosphotyrosine-binding domain (PTB)"/>
    <property type="match status" value="1"/>
</dbReference>
<dbReference type="Gene3D" id="1.10.510.10">
    <property type="entry name" value="Transferase(Phosphotransferase) domain 1"/>
    <property type="match status" value="1"/>
</dbReference>
<dbReference type="InterPro" id="IPR000095">
    <property type="entry name" value="CRIB_dom"/>
</dbReference>
<dbReference type="InterPro" id="IPR036936">
    <property type="entry name" value="CRIB_dom_sf"/>
</dbReference>
<dbReference type="InterPro" id="IPR011009">
    <property type="entry name" value="Kinase-like_dom_sf"/>
</dbReference>
<dbReference type="InterPro" id="IPR051931">
    <property type="entry name" value="PAK3-like"/>
</dbReference>
<dbReference type="InterPro" id="IPR033923">
    <property type="entry name" value="PAK_BD"/>
</dbReference>
<dbReference type="InterPro" id="IPR011993">
    <property type="entry name" value="PH-like_dom_sf"/>
</dbReference>
<dbReference type="InterPro" id="IPR001849">
    <property type="entry name" value="PH_domain"/>
</dbReference>
<dbReference type="InterPro" id="IPR000719">
    <property type="entry name" value="Prot_kinase_dom"/>
</dbReference>
<dbReference type="PANTHER" id="PTHR45832">
    <property type="entry name" value="SERINE/THREONINE-PROTEIN KINASE SAMKA-RELATED-RELATED"/>
    <property type="match status" value="1"/>
</dbReference>
<dbReference type="PANTHER" id="PTHR45832:SF22">
    <property type="entry name" value="SERINE_THREONINE-PROTEIN KINASE SAMKA-RELATED"/>
    <property type="match status" value="1"/>
</dbReference>
<dbReference type="Pfam" id="PF00786">
    <property type="entry name" value="PBD"/>
    <property type="match status" value="1"/>
</dbReference>
<dbReference type="Pfam" id="PF00169">
    <property type="entry name" value="PH"/>
    <property type="match status" value="1"/>
</dbReference>
<dbReference type="Pfam" id="PF00069">
    <property type="entry name" value="Pkinase"/>
    <property type="match status" value="1"/>
</dbReference>
<dbReference type="SMART" id="SM00285">
    <property type="entry name" value="PBD"/>
    <property type="match status" value="1"/>
</dbReference>
<dbReference type="SMART" id="SM00233">
    <property type="entry name" value="PH"/>
    <property type="match status" value="1"/>
</dbReference>
<dbReference type="SMART" id="SM00220">
    <property type="entry name" value="S_TKc"/>
    <property type="match status" value="1"/>
</dbReference>
<dbReference type="SUPFAM" id="SSF50729">
    <property type="entry name" value="PH domain-like"/>
    <property type="match status" value="1"/>
</dbReference>
<dbReference type="SUPFAM" id="SSF56112">
    <property type="entry name" value="Protein kinase-like (PK-like)"/>
    <property type="match status" value="1"/>
</dbReference>
<dbReference type="PROSITE" id="PS50108">
    <property type="entry name" value="CRIB"/>
    <property type="match status" value="1"/>
</dbReference>
<dbReference type="PROSITE" id="PS50003">
    <property type="entry name" value="PH_DOMAIN"/>
    <property type="match status" value="1"/>
</dbReference>
<dbReference type="PROSITE" id="PS50011">
    <property type="entry name" value="PROTEIN_KINASE_DOM"/>
    <property type="match status" value="1"/>
</dbReference>
<reference evidence="6" key="1">
    <citation type="journal article" date="2004" name="Mol. Biol. Cell">
        <title>Dictyostelium PAKc is required for proper chemotaxis.</title>
        <authorList>
            <person name="Lee S."/>
            <person name="Rivero F."/>
            <person name="Park K.C."/>
            <person name="Huang E."/>
            <person name="Funamoto S."/>
            <person name="Firtel R.A."/>
        </authorList>
    </citation>
    <scope>NUCLEOTIDE SEQUENCE [MRNA]</scope>
    <scope>FUNCTION</scope>
    <scope>ACTIVITY REGULATION</scope>
    <scope>INTERACTION WITH RACB</scope>
    <scope>SUBCELLULAR LOCATION</scope>
    <scope>PHOSPHOLIPID-BINDING</scope>
    <scope>DEVELOPMENTAL STAGE</scope>
    <scope>DISRUPTION PHENOTYPE</scope>
    <scope>MUTAGENESIS OF ARG-33; HIS-120; HIS-123; LEU-143; LYS-233; SER-465 AND PRO-469</scope>
</reference>
<reference evidence="6 7" key="2">
    <citation type="submission" date="2003-09" db="EMBL/GenBank/DDBJ databases">
        <title>Dictyostelium discoideum PAK-like kinase fragment.</title>
        <authorList>
            <person name="de la Roche M.A."/>
            <person name="Cote G.P."/>
        </authorList>
    </citation>
    <scope>NUCLEOTIDE SEQUENCE [MRNA]</scope>
</reference>
<reference key="3">
    <citation type="journal article" date="2005" name="Nature">
        <title>The genome of the social amoeba Dictyostelium discoideum.</title>
        <authorList>
            <person name="Eichinger L."/>
            <person name="Pachebat J.A."/>
            <person name="Gloeckner G."/>
            <person name="Rajandream M.A."/>
            <person name="Sucgang R."/>
            <person name="Berriman M."/>
            <person name="Song J."/>
            <person name="Olsen R."/>
            <person name="Szafranski K."/>
            <person name="Xu Q."/>
            <person name="Tunggal B."/>
            <person name="Kummerfeld S."/>
            <person name="Madera M."/>
            <person name="Konfortov B.A."/>
            <person name="Rivero F."/>
            <person name="Bankier A.T."/>
            <person name="Lehmann R."/>
            <person name="Hamlin N."/>
            <person name="Davies R."/>
            <person name="Gaudet P."/>
            <person name="Fey P."/>
            <person name="Pilcher K."/>
            <person name="Chen G."/>
            <person name="Saunders D."/>
            <person name="Sodergren E.J."/>
            <person name="Davis P."/>
            <person name="Kerhornou A."/>
            <person name="Nie X."/>
            <person name="Hall N."/>
            <person name="Anjard C."/>
            <person name="Hemphill L."/>
            <person name="Bason N."/>
            <person name="Farbrother P."/>
            <person name="Desany B."/>
            <person name="Just E."/>
            <person name="Morio T."/>
            <person name="Rost R."/>
            <person name="Churcher C.M."/>
            <person name="Cooper J."/>
            <person name="Haydock S."/>
            <person name="van Driessche N."/>
            <person name="Cronin A."/>
            <person name="Goodhead I."/>
            <person name="Muzny D.M."/>
            <person name="Mourier T."/>
            <person name="Pain A."/>
            <person name="Lu M."/>
            <person name="Harper D."/>
            <person name="Lindsay R."/>
            <person name="Hauser H."/>
            <person name="James K.D."/>
            <person name="Quiles M."/>
            <person name="Madan Babu M."/>
            <person name="Saito T."/>
            <person name="Buchrieser C."/>
            <person name="Wardroper A."/>
            <person name="Felder M."/>
            <person name="Thangavelu M."/>
            <person name="Johnson D."/>
            <person name="Knights A."/>
            <person name="Loulseged H."/>
            <person name="Mungall K.L."/>
            <person name="Oliver K."/>
            <person name="Price C."/>
            <person name="Quail M.A."/>
            <person name="Urushihara H."/>
            <person name="Hernandez J."/>
            <person name="Rabbinowitsch E."/>
            <person name="Steffen D."/>
            <person name="Sanders M."/>
            <person name="Ma J."/>
            <person name="Kohara Y."/>
            <person name="Sharp S."/>
            <person name="Simmonds M.N."/>
            <person name="Spiegler S."/>
            <person name="Tivey A."/>
            <person name="Sugano S."/>
            <person name="White B."/>
            <person name="Walker D."/>
            <person name="Woodward J.R."/>
            <person name="Winckler T."/>
            <person name="Tanaka Y."/>
            <person name="Shaulsky G."/>
            <person name="Schleicher M."/>
            <person name="Weinstock G.M."/>
            <person name="Rosenthal A."/>
            <person name="Cox E.C."/>
            <person name="Chisholm R.L."/>
            <person name="Gibbs R.A."/>
            <person name="Loomis W.F."/>
            <person name="Platzer M."/>
            <person name="Kay R.R."/>
            <person name="Williams J.G."/>
            <person name="Dear P.H."/>
            <person name="Noegel A.A."/>
            <person name="Barrell B.G."/>
            <person name="Kuspa A."/>
        </authorList>
    </citation>
    <scope>NUCLEOTIDE SEQUENCE [LARGE SCALE GENOMIC DNA]</scope>
    <source>
        <strain>AX4</strain>
    </source>
</reference>
<name>PAKC_DICDI</name>
<accession>Q55GV3</accession>
<accession>Q9NAY0</accession>